<sequence length="245" mass="28078">MIIPSLDFIHGKIVRLYQGNYNNKISYKKDIFKQIEKYIYQGATYIHLVDLDGCNNPENRQKSMFNIFSNFKNVSFQVGGGIRSKRDIENLFHAGVSKIVIGTSAILYPNKFKKWLKNYGSKNFVLSVDININTKKENKIAIQGWKKTTEINLDDAIKQFIPYGLKNILCTDISRDGTFSGPNISLYKYLKNKFPNIVLQSSGGINSISDIYNLKKNNVEHVIVGRALLENKFTFLEASKCWLKE</sequence>
<feature type="chain" id="PRO_0000290454" description="1-(5-phosphoribosyl)-5-[(5-phosphoribosylamino)methylideneamino] imidazole-4-carboxamide isomerase">
    <location>
        <begin position="1"/>
        <end position="245"/>
    </location>
</feature>
<feature type="active site" description="Proton acceptor" evidence="1">
    <location>
        <position position="7"/>
    </location>
</feature>
<feature type="active site" description="Proton donor" evidence="1">
    <location>
        <position position="129"/>
    </location>
</feature>
<protein>
    <recommendedName>
        <fullName evidence="1">1-(5-phosphoribosyl)-5-[(5-phosphoribosylamino)methylideneamino] imidazole-4-carboxamide isomerase</fullName>
        <ecNumber evidence="1">5.3.1.16</ecNumber>
    </recommendedName>
    <alternativeName>
        <fullName evidence="1">Phosphoribosylformimino-5-aminoimidazole carboxamide ribotide isomerase</fullName>
    </alternativeName>
</protein>
<dbReference type="EC" id="5.3.1.16" evidence="1"/>
<dbReference type="EMBL" id="CP000263">
    <property type="protein sequence ID" value="ABJ90546.1"/>
    <property type="molecule type" value="Genomic_DNA"/>
</dbReference>
<dbReference type="RefSeq" id="WP_011672465.1">
    <property type="nucleotide sequence ID" value="NC_008513.1"/>
</dbReference>
<dbReference type="SMR" id="Q058A3"/>
<dbReference type="STRING" id="372461.BCc_068"/>
<dbReference type="KEGG" id="bcc:BCc_068"/>
<dbReference type="eggNOG" id="COG0106">
    <property type="taxonomic scope" value="Bacteria"/>
</dbReference>
<dbReference type="HOGENOM" id="CLU_048577_1_2_6"/>
<dbReference type="OrthoDB" id="9807749at2"/>
<dbReference type="UniPathway" id="UPA00031">
    <property type="reaction ID" value="UER00009"/>
</dbReference>
<dbReference type="Proteomes" id="UP000000669">
    <property type="component" value="Chromosome"/>
</dbReference>
<dbReference type="GO" id="GO:0005737">
    <property type="term" value="C:cytoplasm"/>
    <property type="evidence" value="ECO:0007669"/>
    <property type="project" value="UniProtKB-SubCell"/>
</dbReference>
<dbReference type="GO" id="GO:0003949">
    <property type="term" value="F:1-(5-phosphoribosyl)-5-[(5-phosphoribosylamino)methylideneamino]imidazole-4-carboxamide isomerase activity"/>
    <property type="evidence" value="ECO:0007669"/>
    <property type="project" value="UniProtKB-UniRule"/>
</dbReference>
<dbReference type="GO" id="GO:0000105">
    <property type="term" value="P:L-histidine biosynthetic process"/>
    <property type="evidence" value="ECO:0007669"/>
    <property type="project" value="UniProtKB-UniRule"/>
</dbReference>
<dbReference type="GO" id="GO:0000162">
    <property type="term" value="P:L-tryptophan biosynthetic process"/>
    <property type="evidence" value="ECO:0007669"/>
    <property type="project" value="TreeGrafter"/>
</dbReference>
<dbReference type="CDD" id="cd04732">
    <property type="entry name" value="HisA"/>
    <property type="match status" value="1"/>
</dbReference>
<dbReference type="FunFam" id="3.20.20.70:FF:000009">
    <property type="entry name" value="1-(5-phosphoribosyl)-5-[(5-phosphoribosylamino)methylideneamino] imidazole-4-carboxamide isomerase"/>
    <property type="match status" value="1"/>
</dbReference>
<dbReference type="Gene3D" id="3.20.20.70">
    <property type="entry name" value="Aldolase class I"/>
    <property type="match status" value="1"/>
</dbReference>
<dbReference type="HAMAP" id="MF_01014">
    <property type="entry name" value="HisA"/>
    <property type="match status" value="1"/>
</dbReference>
<dbReference type="InterPro" id="IPR013785">
    <property type="entry name" value="Aldolase_TIM"/>
</dbReference>
<dbReference type="InterPro" id="IPR006062">
    <property type="entry name" value="His_biosynth"/>
</dbReference>
<dbReference type="InterPro" id="IPR006063">
    <property type="entry name" value="HisA_bact_arch"/>
</dbReference>
<dbReference type="InterPro" id="IPR044524">
    <property type="entry name" value="Isoase_HisA-like"/>
</dbReference>
<dbReference type="InterPro" id="IPR023016">
    <property type="entry name" value="Isoase_HisA-like_bact"/>
</dbReference>
<dbReference type="InterPro" id="IPR011060">
    <property type="entry name" value="RibuloseP-bd_barrel"/>
</dbReference>
<dbReference type="NCBIfam" id="TIGR00007">
    <property type="entry name" value="1-(5-phosphoribosyl)-5-[(5-phosphoribosylamino)methylideneamino]imidazole-4-carboxamide isomerase"/>
    <property type="match status" value="1"/>
</dbReference>
<dbReference type="PANTHER" id="PTHR43090">
    <property type="entry name" value="1-(5-PHOSPHORIBOSYL)-5-[(5-PHOSPHORIBOSYLAMINO)METHYLIDENEAMINO] IMIDAZOLE-4-CARBOXAMIDE ISOMERASE"/>
    <property type="match status" value="1"/>
</dbReference>
<dbReference type="PANTHER" id="PTHR43090:SF2">
    <property type="entry name" value="1-(5-PHOSPHORIBOSYL)-5-[(5-PHOSPHORIBOSYLAMINO)METHYLIDENEAMINO] IMIDAZOLE-4-CARBOXAMIDE ISOMERASE"/>
    <property type="match status" value="1"/>
</dbReference>
<dbReference type="Pfam" id="PF00977">
    <property type="entry name" value="His_biosynth"/>
    <property type="match status" value="1"/>
</dbReference>
<dbReference type="SUPFAM" id="SSF51366">
    <property type="entry name" value="Ribulose-phoshate binding barrel"/>
    <property type="match status" value="1"/>
</dbReference>
<name>HIS4_BUCCC</name>
<organism>
    <name type="scientific">Buchnera aphidicola subsp. Cinara cedri (strain Cc)</name>
    <dbReference type="NCBI Taxonomy" id="372461"/>
    <lineage>
        <taxon>Bacteria</taxon>
        <taxon>Pseudomonadati</taxon>
        <taxon>Pseudomonadota</taxon>
        <taxon>Gammaproteobacteria</taxon>
        <taxon>Enterobacterales</taxon>
        <taxon>Erwiniaceae</taxon>
        <taxon>Buchnera</taxon>
    </lineage>
</organism>
<gene>
    <name evidence="1" type="primary">hisA</name>
    <name type="ordered locus">BCc_068</name>
</gene>
<proteinExistence type="inferred from homology"/>
<keyword id="KW-0028">Amino-acid biosynthesis</keyword>
<keyword id="KW-0963">Cytoplasm</keyword>
<keyword id="KW-0368">Histidine biosynthesis</keyword>
<keyword id="KW-0413">Isomerase</keyword>
<keyword id="KW-1185">Reference proteome</keyword>
<reference key="1">
    <citation type="journal article" date="2006" name="Science">
        <title>A small microbial genome: the end of a long symbiotic relationship?</title>
        <authorList>
            <person name="Perez-Brocal V."/>
            <person name="Gil R."/>
            <person name="Ramos S."/>
            <person name="Lamelas A."/>
            <person name="Postigo M."/>
            <person name="Michelena J.M."/>
            <person name="Silva F.J."/>
            <person name="Moya A."/>
            <person name="Latorre A."/>
        </authorList>
    </citation>
    <scope>NUCLEOTIDE SEQUENCE [LARGE SCALE GENOMIC DNA]</scope>
    <source>
        <strain>Cc</strain>
    </source>
</reference>
<comment type="catalytic activity">
    <reaction evidence="1">
        <text>1-(5-phospho-beta-D-ribosyl)-5-[(5-phospho-beta-D-ribosylamino)methylideneamino]imidazole-4-carboxamide = 5-[(5-phospho-1-deoxy-D-ribulos-1-ylimino)methylamino]-1-(5-phospho-beta-D-ribosyl)imidazole-4-carboxamide</text>
        <dbReference type="Rhea" id="RHEA:15469"/>
        <dbReference type="ChEBI" id="CHEBI:58435"/>
        <dbReference type="ChEBI" id="CHEBI:58525"/>
        <dbReference type="EC" id="5.3.1.16"/>
    </reaction>
</comment>
<comment type="pathway">
    <text evidence="1">Amino-acid biosynthesis; L-histidine biosynthesis; L-histidine from 5-phospho-alpha-D-ribose 1-diphosphate: step 4/9.</text>
</comment>
<comment type="subcellular location">
    <subcellularLocation>
        <location evidence="1">Cytoplasm</location>
    </subcellularLocation>
</comment>
<comment type="similarity">
    <text evidence="1">Belongs to the HisA/HisF family.</text>
</comment>
<accession>Q058A3</accession>
<evidence type="ECO:0000255" key="1">
    <source>
        <dbReference type="HAMAP-Rule" id="MF_01014"/>
    </source>
</evidence>